<keyword id="KW-0687">Ribonucleoprotein</keyword>
<keyword id="KW-0689">Ribosomal protein</keyword>
<keyword id="KW-0694">RNA-binding</keyword>
<keyword id="KW-0699">rRNA-binding</keyword>
<reference key="1">
    <citation type="journal article" date="2011" name="J. Bacteriol.">
        <title>Comparative genomics of 28 Salmonella enterica isolates: evidence for CRISPR-mediated adaptive sublineage evolution.</title>
        <authorList>
            <person name="Fricke W.F."/>
            <person name="Mammel M.K."/>
            <person name="McDermott P.F."/>
            <person name="Tartera C."/>
            <person name="White D.G."/>
            <person name="Leclerc J.E."/>
            <person name="Ravel J."/>
            <person name="Cebula T.A."/>
        </authorList>
    </citation>
    <scope>NUCLEOTIDE SEQUENCE [LARGE SCALE GENOMIC DNA]</scope>
    <source>
        <strain>CT_02021853</strain>
    </source>
</reference>
<sequence length="92" mass="10416">MPRSLKKGPFIDLHLLKKVEKAVESGDKKPLRTWSRRSTIFPNMIGLTIAVHNGRQHVPVFVSDEMVGHKLGEFAPTRTYRGHAADKKAKKK</sequence>
<organism>
    <name type="scientific">Salmonella dublin (strain CT_02021853)</name>
    <dbReference type="NCBI Taxonomy" id="439851"/>
    <lineage>
        <taxon>Bacteria</taxon>
        <taxon>Pseudomonadati</taxon>
        <taxon>Pseudomonadota</taxon>
        <taxon>Gammaproteobacteria</taxon>
        <taxon>Enterobacterales</taxon>
        <taxon>Enterobacteriaceae</taxon>
        <taxon>Salmonella</taxon>
    </lineage>
</organism>
<accession>B5FJL0</accession>
<name>RS19_SALDC</name>
<feature type="chain" id="PRO_1000128029" description="Small ribosomal subunit protein uS19">
    <location>
        <begin position="1"/>
        <end position="92"/>
    </location>
</feature>
<evidence type="ECO:0000255" key="1">
    <source>
        <dbReference type="HAMAP-Rule" id="MF_00531"/>
    </source>
</evidence>
<evidence type="ECO:0000305" key="2"/>
<proteinExistence type="inferred from homology"/>
<gene>
    <name evidence="1" type="primary">rpsS</name>
    <name type="ordered locus">SeD_A3803</name>
</gene>
<dbReference type="EMBL" id="CP001144">
    <property type="protein sequence ID" value="ACH77139.1"/>
    <property type="molecule type" value="Genomic_DNA"/>
</dbReference>
<dbReference type="RefSeq" id="WP_001138115.1">
    <property type="nucleotide sequence ID" value="NC_011205.1"/>
</dbReference>
<dbReference type="SMR" id="B5FJL0"/>
<dbReference type="GeneID" id="97603665"/>
<dbReference type="KEGG" id="sed:SeD_A3803"/>
<dbReference type="HOGENOM" id="CLU_144911_0_1_6"/>
<dbReference type="Proteomes" id="UP000008322">
    <property type="component" value="Chromosome"/>
</dbReference>
<dbReference type="GO" id="GO:0005737">
    <property type="term" value="C:cytoplasm"/>
    <property type="evidence" value="ECO:0007669"/>
    <property type="project" value="UniProtKB-ARBA"/>
</dbReference>
<dbReference type="GO" id="GO:0015935">
    <property type="term" value="C:small ribosomal subunit"/>
    <property type="evidence" value="ECO:0007669"/>
    <property type="project" value="InterPro"/>
</dbReference>
<dbReference type="GO" id="GO:0019843">
    <property type="term" value="F:rRNA binding"/>
    <property type="evidence" value="ECO:0007669"/>
    <property type="project" value="UniProtKB-UniRule"/>
</dbReference>
<dbReference type="GO" id="GO:0003735">
    <property type="term" value="F:structural constituent of ribosome"/>
    <property type="evidence" value="ECO:0007669"/>
    <property type="project" value="InterPro"/>
</dbReference>
<dbReference type="GO" id="GO:0000028">
    <property type="term" value="P:ribosomal small subunit assembly"/>
    <property type="evidence" value="ECO:0007669"/>
    <property type="project" value="TreeGrafter"/>
</dbReference>
<dbReference type="GO" id="GO:0006412">
    <property type="term" value="P:translation"/>
    <property type="evidence" value="ECO:0007669"/>
    <property type="project" value="UniProtKB-UniRule"/>
</dbReference>
<dbReference type="FunFam" id="3.30.860.10:FF:000001">
    <property type="entry name" value="30S ribosomal protein S19"/>
    <property type="match status" value="1"/>
</dbReference>
<dbReference type="Gene3D" id="3.30.860.10">
    <property type="entry name" value="30s Ribosomal Protein S19, Chain A"/>
    <property type="match status" value="1"/>
</dbReference>
<dbReference type="HAMAP" id="MF_00531">
    <property type="entry name" value="Ribosomal_uS19"/>
    <property type="match status" value="1"/>
</dbReference>
<dbReference type="InterPro" id="IPR002222">
    <property type="entry name" value="Ribosomal_uS19"/>
</dbReference>
<dbReference type="InterPro" id="IPR005732">
    <property type="entry name" value="Ribosomal_uS19_bac-type"/>
</dbReference>
<dbReference type="InterPro" id="IPR020934">
    <property type="entry name" value="Ribosomal_uS19_CS"/>
</dbReference>
<dbReference type="InterPro" id="IPR023575">
    <property type="entry name" value="Ribosomal_uS19_SF"/>
</dbReference>
<dbReference type="NCBIfam" id="TIGR01050">
    <property type="entry name" value="rpsS_bact"/>
    <property type="match status" value="1"/>
</dbReference>
<dbReference type="PANTHER" id="PTHR11880">
    <property type="entry name" value="RIBOSOMAL PROTEIN S19P FAMILY MEMBER"/>
    <property type="match status" value="1"/>
</dbReference>
<dbReference type="PANTHER" id="PTHR11880:SF8">
    <property type="entry name" value="SMALL RIBOSOMAL SUBUNIT PROTEIN US19M"/>
    <property type="match status" value="1"/>
</dbReference>
<dbReference type="Pfam" id="PF00203">
    <property type="entry name" value="Ribosomal_S19"/>
    <property type="match status" value="1"/>
</dbReference>
<dbReference type="PIRSF" id="PIRSF002144">
    <property type="entry name" value="Ribosomal_S19"/>
    <property type="match status" value="1"/>
</dbReference>
<dbReference type="PRINTS" id="PR00975">
    <property type="entry name" value="RIBOSOMALS19"/>
</dbReference>
<dbReference type="SUPFAM" id="SSF54570">
    <property type="entry name" value="Ribosomal protein S19"/>
    <property type="match status" value="1"/>
</dbReference>
<dbReference type="PROSITE" id="PS00323">
    <property type="entry name" value="RIBOSOMAL_S19"/>
    <property type="match status" value="1"/>
</dbReference>
<protein>
    <recommendedName>
        <fullName evidence="1">Small ribosomal subunit protein uS19</fullName>
    </recommendedName>
    <alternativeName>
        <fullName evidence="2">30S ribosomal protein S19</fullName>
    </alternativeName>
</protein>
<comment type="function">
    <text evidence="1">Protein S19 forms a complex with S13 that binds strongly to the 16S ribosomal RNA.</text>
</comment>
<comment type="similarity">
    <text evidence="1">Belongs to the universal ribosomal protein uS19 family.</text>
</comment>